<gene>
    <name evidence="1" type="primary">cysS</name>
    <name type="ordered locus">Pfl01_3638</name>
</gene>
<dbReference type="EC" id="6.1.1.16" evidence="1"/>
<dbReference type="EMBL" id="CP000094">
    <property type="protein sequence ID" value="ABA75376.1"/>
    <property type="molecule type" value="Genomic_DNA"/>
</dbReference>
<dbReference type="RefSeq" id="WP_011334983.1">
    <property type="nucleotide sequence ID" value="NC_007492.2"/>
</dbReference>
<dbReference type="SMR" id="Q3KA28"/>
<dbReference type="KEGG" id="pfo:Pfl01_3638"/>
<dbReference type="eggNOG" id="COG0215">
    <property type="taxonomic scope" value="Bacteria"/>
</dbReference>
<dbReference type="HOGENOM" id="CLU_013528_0_1_6"/>
<dbReference type="Proteomes" id="UP000002704">
    <property type="component" value="Chromosome"/>
</dbReference>
<dbReference type="GO" id="GO:0005829">
    <property type="term" value="C:cytosol"/>
    <property type="evidence" value="ECO:0007669"/>
    <property type="project" value="TreeGrafter"/>
</dbReference>
<dbReference type="GO" id="GO:0005524">
    <property type="term" value="F:ATP binding"/>
    <property type="evidence" value="ECO:0007669"/>
    <property type="project" value="UniProtKB-UniRule"/>
</dbReference>
<dbReference type="GO" id="GO:0004817">
    <property type="term" value="F:cysteine-tRNA ligase activity"/>
    <property type="evidence" value="ECO:0007669"/>
    <property type="project" value="UniProtKB-UniRule"/>
</dbReference>
<dbReference type="GO" id="GO:0008270">
    <property type="term" value="F:zinc ion binding"/>
    <property type="evidence" value="ECO:0007669"/>
    <property type="project" value="UniProtKB-UniRule"/>
</dbReference>
<dbReference type="GO" id="GO:0006423">
    <property type="term" value="P:cysteinyl-tRNA aminoacylation"/>
    <property type="evidence" value="ECO:0007669"/>
    <property type="project" value="UniProtKB-UniRule"/>
</dbReference>
<dbReference type="CDD" id="cd07963">
    <property type="entry name" value="Anticodon_Ia_Cys"/>
    <property type="match status" value="1"/>
</dbReference>
<dbReference type="CDD" id="cd00672">
    <property type="entry name" value="CysRS_core"/>
    <property type="match status" value="1"/>
</dbReference>
<dbReference type="FunFam" id="3.40.50.620:FF:000009">
    <property type="entry name" value="Cysteine--tRNA ligase"/>
    <property type="match status" value="1"/>
</dbReference>
<dbReference type="Gene3D" id="1.20.120.1910">
    <property type="entry name" value="Cysteine-tRNA ligase, C-terminal anti-codon recognition domain"/>
    <property type="match status" value="1"/>
</dbReference>
<dbReference type="Gene3D" id="3.40.50.620">
    <property type="entry name" value="HUPs"/>
    <property type="match status" value="1"/>
</dbReference>
<dbReference type="HAMAP" id="MF_00041">
    <property type="entry name" value="Cys_tRNA_synth"/>
    <property type="match status" value="1"/>
</dbReference>
<dbReference type="InterPro" id="IPR015803">
    <property type="entry name" value="Cys-tRNA-ligase"/>
</dbReference>
<dbReference type="InterPro" id="IPR015273">
    <property type="entry name" value="Cys-tRNA-synt_Ia_DALR"/>
</dbReference>
<dbReference type="InterPro" id="IPR024909">
    <property type="entry name" value="Cys-tRNA/MSH_ligase"/>
</dbReference>
<dbReference type="InterPro" id="IPR056411">
    <property type="entry name" value="CysS_C"/>
</dbReference>
<dbReference type="InterPro" id="IPR014729">
    <property type="entry name" value="Rossmann-like_a/b/a_fold"/>
</dbReference>
<dbReference type="InterPro" id="IPR032678">
    <property type="entry name" value="tRNA-synt_1_cat_dom"/>
</dbReference>
<dbReference type="InterPro" id="IPR009080">
    <property type="entry name" value="tRNAsynth_Ia_anticodon-bd"/>
</dbReference>
<dbReference type="NCBIfam" id="TIGR00435">
    <property type="entry name" value="cysS"/>
    <property type="match status" value="1"/>
</dbReference>
<dbReference type="PANTHER" id="PTHR10890:SF3">
    <property type="entry name" value="CYSTEINE--TRNA LIGASE, CYTOPLASMIC"/>
    <property type="match status" value="1"/>
</dbReference>
<dbReference type="PANTHER" id="PTHR10890">
    <property type="entry name" value="CYSTEINYL-TRNA SYNTHETASE"/>
    <property type="match status" value="1"/>
</dbReference>
<dbReference type="Pfam" id="PF23493">
    <property type="entry name" value="CysS_C"/>
    <property type="match status" value="1"/>
</dbReference>
<dbReference type="Pfam" id="PF09190">
    <property type="entry name" value="DALR_2"/>
    <property type="match status" value="1"/>
</dbReference>
<dbReference type="Pfam" id="PF01406">
    <property type="entry name" value="tRNA-synt_1e"/>
    <property type="match status" value="1"/>
</dbReference>
<dbReference type="PRINTS" id="PR00983">
    <property type="entry name" value="TRNASYNTHCYS"/>
</dbReference>
<dbReference type="SMART" id="SM00840">
    <property type="entry name" value="DALR_2"/>
    <property type="match status" value="1"/>
</dbReference>
<dbReference type="SUPFAM" id="SSF47323">
    <property type="entry name" value="Anticodon-binding domain of a subclass of class I aminoacyl-tRNA synthetases"/>
    <property type="match status" value="1"/>
</dbReference>
<dbReference type="SUPFAM" id="SSF52374">
    <property type="entry name" value="Nucleotidylyl transferase"/>
    <property type="match status" value="1"/>
</dbReference>
<comment type="catalytic activity">
    <reaction evidence="1">
        <text>tRNA(Cys) + L-cysteine + ATP = L-cysteinyl-tRNA(Cys) + AMP + diphosphate</text>
        <dbReference type="Rhea" id="RHEA:17773"/>
        <dbReference type="Rhea" id="RHEA-COMP:9661"/>
        <dbReference type="Rhea" id="RHEA-COMP:9679"/>
        <dbReference type="ChEBI" id="CHEBI:30616"/>
        <dbReference type="ChEBI" id="CHEBI:33019"/>
        <dbReference type="ChEBI" id="CHEBI:35235"/>
        <dbReference type="ChEBI" id="CHEBI:78442"/>
        <dbReference type="ChEBI" id="CHEBI:78517"/>
        <dbReference type="ChEBI" id="CHEBI:456215"/>
        <dbReference type="EC" id="6.1.1.16"/>
    </reaction>
</comment>
<comment type="cofactor">
    <cofactor evidence="1">
        <name>Zn(2+)</name>
        <dbReference type="ChEBI" id="CHEBI:29105"/>
    </cofactor>
    <text evidence="1">Binds 1 zinc ion per subunit.</text>
</comment>
<comment type="subunit">
    <text evidence="1">Monomer.</text>
</comment>
<comment type="subcellular location">
    <subcellularLocation>
        <location evidence="1">Cytoplasm</location>
    </subcellularLocation>
</comment>
<comment type="similarity">
    <text evidence="1">Belongs to the class-I aminoacyl-tRNA synthetase family.</text>
</comment>
<accession>Q3KA28</accession>
<evidence type="ECO:0000255" key="1">
    <source>
        <dbReference type="HAMAP-Rule" id="MF_00041"/>
    </source>
</evidence>
<sequence length="460" mass="51553">MLTIYNTLTKSKEVFKPLDGNKVRMYVCGMTVYDYCHLGHGRSMVAFDLVTRWLRFSGYDLTYVRNITDIDDKIINRANENGESFEALTERMIAAMHEDEARLNIKKPDMEPRATDHIPGMHAMIQTLIDKGYAYAPGNGDVYYRVGKFMGYGKLSRKKIEDLRIGARIEVDEAKEDPLDFVLWKGVKPGEPSWESPWGAGRPGWHIECSVMSTCCLGETFDIHGGGSDLEFPHHENEIAQSEAATGKTYANAWMHCGMIRINGEKMSKSLNNFFTIRDVLDKYHPEVVRYLLVSSHYRSAINYSEDNLKDAKGALERFYHALKGLPKVAPAGGEAFVERFTQVMNDDFGTPEACAVLFEMVREINRLRESDLDAAAGLAARLKELASVLGVLQLEADDFLQAGAEGRVDAAEVDALIQARLTARANKDWAESDRIRDQLTAMGVVLEDGKGGTTWRLAD</sequence>
<reference key="1">
    <citation type="journal article" date="2009" name="Genome Biol.">
        <title>Genomic and genetic analyses of diversity and plant interactions of Pseudomonas fluorescens.</title>
        <authorList>
            <person name="Silby M.W."/>
            <person name="Cerdeno-Tarraga A.M."/>
            <person name="Vernikos G.S."/>
            <person name="Giddens S.R."/>
            <person name="Jackson R.W."/>
            <person name="Preston G.M."/>
            <person name="Zhang X.-X."/>
            <person name="Moon C.D."/>
            <person name="Gehrig S.M."/>
            <person name="Godfrey S.A.C."/>
            <person name="Knight C.G."/>
            <person name="Malone J.G."/>
            <person name="Robinson Z."/>
            <person name="Spiers A.J."/>
            <person name="Harris S."/>
            <person name="Challis G.L."/>
            <person name="Yaxley A.M."/>
            <person name="Harris D."/>
            <person name="Seeger K."/>
            <person name="Murphy L."/>
            <person name="Rutter S."/>
            <person name="Squares R."/>
            <person name="Quail M.A."/>
            <person name="Saunders E."/>
            <person name="Mavromatis K."/>
            <person name="Brettin T.S."/>
            <person name="Bentley S.D."/>
            <person name="Hothersall J."/>
            <person name="Stephens E."/>
            <person name="Thomas C.M."/>
            <person name="Parkhill J."/>
            <person name="Levy S.B."/>
            <person name="Rainey P.B."/>
            <person name="Thomson N.R."/>
        </authorList>
    </citation>
    <scope>NUCLEOTIDE SEQUENCE [LARGE SCALE GENOMIC DNA]</scope>
    <source>
        <strain>Pf0-1</strain>
    </source>
</reference>
<proteinExistence type="inferred from homology"/>
<feature type="chain" id="PRO_0000240937" description="Cysteine--tRNA ligase">
    <location>
        <begin position="1"/>
        <end position="460"/>
    </location>
</feature>
<feature type="short sequence motif" description="'HIGH' region">
    <location>
        <begin position="30"/>
        <end position="40"/>
    </location>
</feature>
<feature type="short sequence motif" description="'KMSKS' region">
    <location>
        <begin position="266"/>
        <end position="270"/>
    </location>
</feature>
<feature type="binding site" evidence="1">
    <location>
        <position position="28"/>
    </location>
    <ligand>
        <name>Zn(2+)</name>
        <dbReference type="ChEBI" id="CHEBI:29105"/>
    </ligand>
</feature>
<feature type="binding site" evidence="1">
    <location>
        <position position="209"/>
    </location>
    <ligand>
        <name>Zn(2+)</name>
        <dbReference type="ChEBI" id="CHEBI:29105"/>
    </ligand>
</feature>
<feature type="binding site" evidence="1">
    <location>
        <position position="234"/>
    </location>
    <ligand>
        <name>Zn(2+)</name>
        <dbReference type="ChEBI" id="CHEBI:29105"/>
    </ligand>
</feature>
<feature type="binding site" evidence="1">
    <location>
        <position position="238"/>
    </location>
    <ligand>
        <name>Zn(2+)</name>
        <dbReference type="ChEBI" id="CHEBI:29105"/>
    </ligand>
</feature>
<feature type="binding site" evidence="1">
    <location>
        <position position="269"/>
    </location>
    <ligand>
        <name>ATP</name>
        <dbReference type="ChEBI" id="CHEBI:30616"/>
    </ligand>
</feature>
<name>SYC_PSEPF</name>
<protein>
    <recommendedName>
        <fullName evidence="1">Cysteine--tRNA ligase</fullName>
        <ecNumber evidence="1">6.1.1.16</ecNumber>
    </recommendedName>
    <alternativeName>
        <fullName evidence="1">Cysteinyl-tRNA synthetase</fullName>
        <shortName evidence="1">CysRS</shortName>
    </alternativeName>
</protein>
<keyword id="KW-0030">Aminoacyl-tRNA synthetase</keyword>
<keyword id="KW-0067">ATP-binding</keyword>
<keyword id="KW-0963">Cytoplasm</keyword>
<keyword id="KW-0436">Ligase</keyword>
<keyword id="KW-0479">Metal-binding</keyword>
<keyword id="KW-0547">Nucleotide-binding</keyword>
<keyword id="KW-0648">Protein biosynthesis</keyword>
<keyword id="KW-0862">Zinc</keyword>
<organism>
    <name type="scientific">Pseudomonas fluorescens (strain Pf0-1)</name>
    <dbReference type="NCBI Taxonomy" id="205922"/>
    <lineage>
        <taxon>Bacteria</taxon>
        <taxon>Pseudomonadati</taxon>
        <taxon>Pseudomonadota</taxon>
        <taxon>Gammaproteobacteria</taxon>
        <taxon>Pseudomonadales</taxon>
        <taxon>Pseudomonadaceae</taxon>
        <taxon>Pseudomonas</taxon>
    </lineage>
</organism>